<dbReference type="EMBL" id="AP009351">
    <property type="protein sequence ID" value="BAF67616.1"/>
    <property type="molecule type" value="Genomic_DNA"/>
</dbReference>
<dbReference type="SMR" id="A6QGY4"/>
<dbReference type="KEGG" id="sae:NWMN_1344"/>
<dbReference type="HOGENOM" id="CLU_000041_2_1_9"/>
<dbReference type="Proteomes" id="UP000006386">
    <property type="component" value="Chromosome"/>
</dbReference>
<dbReference type="GO" id="GO:0005886">
    <property type="term" value="C:plasma membrane"/>
    <property type="evidence" value="ECO:0007669"/>
    <property type="project" value="UniProtKB-SubCell"/>
</dbReference>
<dbReference type="Gene3D" id="1.20.120.1850">
    <property type="entry name" value="Ebh helix bundles repeating unit (S and A modules)"/>
    <property type="match status" value="5"/>
</dbReference>
<dbReference type="Gene3D" id="1.20.5.420">
    <property type="entry name" value="Immunoglobulin FC, subunit C"/>
    <property type="match status" value="30"/>
</dbReference>
<dbReference type="InterPro" id="IPR011439">
    <property type="entry name" value="DUF1542"/>
</dbReference>
<dbReference type="InterPro" id="IPR051197">
    <property type="entry name" value="ECM-binding_protein"/>
</dbReference>
<dbReference type="InterPro" id="IPR020840">
    <property type="entry name" value="Extracell_matrix-bd_GA"/>
</dbReference>
<dbReference type="InterPro" id="IPR002988">
    <property type="entry name" value="GA_module"/>
</dbReference>
<dbReference type="InterPro" id="IPR009063">
    <property type="entry name" value="Ig/albumin-bd_sf"/>
</dbReference>
<dbReference type="PANTHER" id="PTHR33150">
    <property type="entry name" value="EXTRACELLULAR MATRIX-BINDING PROTEIN EBH"/>
    <property type="match status" value="1"/>
</dbReference>
<dbReference type="PANTHER" id="PTHR33150:SF1">
    <property type="entry name" value="EXTRACELLULAR MATRIX-BINDING PROTEIN EBH"/>
    <property type="match status" value="1"/>
</dbReference>
<dbReference type="Pfam" id="PF07564">
    <property type="entry name" value="DUF1542"/>
    <property type="match status" value="8"/>
</dbReference>
<dbReference type="Pfam" id="PF07554">
    <property type="entry name" value="FIVAR"/>
    <property type="match status" value="15"/>
</dbReference>
<dbReference type="Pfam" id="PF01468">
    <property type="entry name" value="GA"/>
    <property type="match status" value="8"/>
</dbReference>
<dbReference type="SMART" id="SM00844">
    <property type="entry name" value="GA"/>
    <property type="match status" value="20"/>
</dbReference>
<dbReference type="SUPFAM" id="SSF46997">
    <property type="entry name" value="Bacterial immunoglobulin/albumin-binding domains"/>
    <property type="match status" value="39"/>
</dbReference>
<organism>
    <name type="scientific">Staphylococcus aureus (strain Newman)</name>
    <dbReference type="NCBI Taxonomy" id="426430"/>
    <lineage>
        <taxon>Bacteria</taxon>
        <taxon>Bacillati</taxon>
        <taxon>Bacillota</taxon>
        <taxon>Bacilli</taxon>
        <taxon>Bacillales</taxon>
        <taxon>Staphylococcaceae</taxon>
        <taxon>Staphylococcus</taxon>
    </lineage>
</organism>
<sequence length="3462" mass="378166">MVQQSTTVAEAQGNEQKANNVDAAMDKLRQSIADNATTKQNQNYTDASQNKKDAYNNAVTTAQGIIDQTTSPTLDPTVINQAAGQVSTTKNALNGNENLEAAKQQASQSLGSLDNLNNAQKQTVTDQINGAHTVDEANQIKQNAQNLNTAMGNLKQAIADKDATKATVNFTDADQAKQQAYNTAVTNAENIISKANGGNATQAEVEQAIKQVNAAKQALNGNANVQHAKDEATALINSSNDLNQAQKDALKQQVQNATTVAGVNNVKQTAQELNNAMTQLKQGIADKEQTKADGNFVNADPDKQNAYNQAVAKAEALISATPDVVVTPSEITAALNKVTQAKNDLNGNTNLATAKQNVQHAIDQLPNLNQAQRDEYSKQITQATLVPNVNAIQQAATTLNDAMTQLKQGIANKAQIKGSENYHDADTDKQTAYDNAVTKAEELLKQTTNPTMDPNTIQQALTKVNDTNQALNGNQKLADAKQDAKTTLGTLDHLNDAQKQALTTQVEQAPDIATVNNVKQNAQNLNNAMTNLNNALQDKTETLNSINFTDADQAKKDAYTNAVSHAEGILSKANGSNASQTEVEQAMQRVNEAKQALNGNDNVQRAKDAAKQVITNANDLNQAQKDALKQQVDAAQTVANVNTIKQTAQDLNQAMTQLKQGIADKDQTKASGNFVNADTDKQNAYNNAVAHAEQIISGTPNANVDPQQVAQALQQVNQAKGDLNGNHNLQVAKDNANTAIDQLPNLNQPQKTALKDQVSHAELVTGVNAIKQNADALNNAMGTLKQQIQANSQVPQSVDFTQADQDKQQAYNNAANQAQQIANGIPTPVLTPDTVTQAVTTMNQAKDALNGDEKLAQAKQEALANLDTLRDLNQPQRDALRNQINQAQALATVEQTKQNAQNVNTAMSNLKQGIANKDTVKASENYHDADADKQTAYTNAVSQAEGIINQTTNPTLNPDEITRALTQVTDAKNGLNGEAKLATEKQNAKDAVSGMTHLNDAQKQALKGQIDQSPEIATVNQVKQTATSLDQAMDQLSQAINDKAQTLADGNYLNADPDKQNAYKQAVAKAEALLNKQSGTNEVQAQVESITNEVNAAKQALNGNDNLANAKQQAKQQLANLTHLNDAQKQSFESQITQAPLVTDVTTINQKAQTLDHAMELLRNSVADNQTTLASEDYHDATAQRQNDYNQAVTAANNIINQTTSPTMNPDDVNGATTQVNNTKVALDGDENLAAAKQQANNRLDQLDHLNNAQKQQLQSQITQSSDIAAVNGHKQTAESLNTAMGNLINAIADHQAVEQRGNFINADTDKQTAYNTAVNEAAAMINKQTGQNANQTEVEQAITKVQTTLQALNGDHNLQVAKTNATQAIDALTSLNDPQKTALKDQVTAATLVTAVHQIEQNANTLNQAMHGLRQSIQDNAATKANSKYINEDQPEQQNYDQAVQAANNIINEQTATLDNNAINQAATTVNTTKAALHGDVKLQNDKDHAKQTVSQLAHLNNAQKHMEDTLIDSETTRTAVKQDLTEAQALDQLMDALQQSIADKDATRASSAYVNAEPNKKQSYDEAVQNAESIIAGLNNPTINKGNVSSATQAVISSKNALDGVERLAQDKQTAGNSLNHLDQLTPAQQQALENQINNATTRGEVAQKLTEAQALNQAMEALRNSIQDQQQTEAGSKFINEDKPQKDAYQAAVQNAKDLINQTNNPTLDKAQVEQLTQAVNQAKDNLHGDQKLADDKQHAVTDLNQLNGLNNPQRQALESQINNAATRGEVAQKLAEAKALDQAMQALRNSIQDQQQTESGSKFINEDKPQKDAYQAAVQNAKDLINQTGNPTLDKSQVEQLTQAVTTAKDNLHGDQKLARDQQQAVTTVNALPNLNHAQQQALTDAINAAPTRTEVAQHVQTATELDHAMETLKNKVDQVNTDKAQPNYTEASTDKKEAVDQALQAAESITDPTNGSNANKDAVDQVLTKLQEKENELNGNERVAEAKTQAKQTIDQLTHLNADQIATAKQNIDQATKLQPIAELVDQATQLNQSMDQLQQAVNEHANVEQTVDYTQADSDKQNAYKQAIADAENVLKQNANKQQVDQALQNILNAKQALNGDERVALAKTNGKHDIDQLNALNNAQQDGFKGRIDQSNDLNQIQQIVDEAKALNRAMDQLSQEITDNEGRTKGSTNYVNADTQVKQVYDETVDKAKQALDKSTGQNLTAKQVIKLNDAVTAAKKALNGEERLNNRKAEALQRLDQLTHLNNAQRQLAIQQINNAETLNKASRAINRATKLDNAMGAVQQYIDEQHLGVISSTNYINADDNLKANYDNAIANAAHELDKVQGNAIAKAEAEQLKQNIIDAQNALNGDQNLANAKDKANAFVNSLNGLNQQQQDLAHKAINNADTVSDVTDIVNNQIDLNDAMETLKHLVDNEIPNAEQTVNYQNADDNAKTNFDDAKRLANTLLNSDNTNVNDINGAIQAVNDAIHNLNGDQRLQDAKDKAIQSINQALANKLKEIEASNATDQDKLIAKNKAEELANSIINNINKATSNQAVSQVQTAGNHAIEQVHANEIPKAKIDANKDVDKQVQALIDEIDRNPNLTDKEKQALKDRINQILQQGHNGINNAMTKEEIEQAKAQLAQALQDIKDLVKAKEDAKQDVDKQVQALIDEIDQNPNLTDKEKQALKDRINQILQQGHNDINNAMTKEAIEQAKERLAQALQDIKDLVKAKEDAKNDIDKRVQALIDEIDQNPNLTDKEKQALKDRINQILQQGHNDINNALTKEEIEQAKAQLAQALQDIKDLVKAKEDAKNAIKALANAKRDQINSNPDLTPEQKAKALKEIDEAEKRALQNVENAQTIDQLNRGLNLGLDDIRNTHVWEVDEQPAVNEIFEATPEQILVNGELIVHRDDIITEQDILAHINLIDQLSAEVIDTPSTATISDSLTAKVEVTLLDGSKVIVNVPVKVVEKELSVVKQQAIESIENAAQQKINEINNSVTLTLEQKEAAIAEVNKLKQQAIDHVNNAPDVHSVEEIQQQEQAHIEQFNPEQFTIEQAKSNAIKSIEDAIQHMIDEIKARTDLTDKEKQEAIAKLNQLKEQAIQAIQRAQSIDEISEQLEQFKAQMKAANPTAKELAKRKQEAISRIKDFSNEKINSIRNSEIGTADEKQAAMNQINEIVLETIRDINNAHTLQQVEAALNNGIARISAVQIVTSDRAKQSSSTGNESNSHLTIGYGTANHPFNSSTIGHKKKLDEDDDIDPLHMRHFSNNFGNVIKNAIGVVGISGLLASFWFFIAKRRRKEDEEEELEIRDNNKDSIKETLDDTKHLPLLFAKRRRKEDEEDVTVEEKDSLNNGESLDKVKHTPFFLPKRRRKEDEEDVEVTNENTDEKVLKDNEHSPLLFAKRRKDKEEDVETTTSIESKDEDVPLLLAKKKNQKDNQSKDKKSASKNTSKKVAAKKKKKKAKKNKK</sequence>
<gene>
    <name type="primary">ebhA</name>
    <name type="ordered locus">NWMN_1344</name>
</gene>
<proteinExistence type="predicted"/>
<keyword id="KW-1003">Cell membrane</keyword>
<keyword id="KW-0472">Membrane</keyword>
<keyword id="KW-0677">Repeat</keyword>
<keyword id="KW-0812">Transmembrane</keyword>
<keyword id="KW-1133">Transmembrane helix</keyword>
<protein>
    <recommendedName>
        <fullName>Extracellular matrix-binding protein EbhA</fullName>
    </recommendedName>
    <alternativeName>
        <fullName>ECM-binding protein homolog A</fullName>
    </alternativeName>
</protein>
<name>EBHA_STAAE</name>
<reference key="1">
    <citation type="journal article" date="2008" name="J. Bacteriol.">
        <title>Genome sequence of Staphylococcus aureus strain Newman and comparative analysis of staphylococcal genomes: polymorphism and evolution of two major pathogenicity islands.</title>
        <authorList>
            <person name="Baba T."/>
            <person name="Bae T."/>
            <person name="Schneewind O."/>
            <person name="Takeuchi F."/>
            <person name="Hiramatsu K."/>
        </authorList>
    </citation>
    <scope>NUCLEOTIDE SEQUENCE [LARGE SCALE GENOMIC DNA]</scope>
    <source>
        <strain>Newman</strain>
    </source>
</reference>
<comment type="subcellular location">
    <subcellularLocation>
        <location evidence="3">Cell membrane</location>
        <topology evidence="3">Single-pass membrane protein</topology>
    </subcellularLocation>
</comment>
<comment type="caution">
    <text evidence="3">In strains Mu3, Mu50, N315 and Newman, ebh is divided into two ORFs, ebhA and ebhB, which correspond to the C-terminal and N-terminal parts of the full gene, respectively.</text>
</comment>
<accession>A6QGY4</accession>
<evidence type="ECO:0000255" key="1"/>
<evidence type="ECO:0000256" key="2">
    <source>
        <dbReference type="SAM" id="MobiDB-lite"/>
    </source>
</evidence>
<evidence type="ECO:0000305" key="3"/>
<feature type="chain" id="PRO_0000345974" description="Extracellular matrix-binding protein EbhA">
    <location>
        <begin position="1"/>
        <end position="3462"/>
    </location>
</feature>
<feature type="transmembrane region" description="Helical" evidence="1">
    <location>
        <begin position="3267"/>
        <end position="3289"/>
    </location>
</feature>
<feature type="domain" description="FIVAR 1">
    <location>
        <begin position="24"/>
        <end position="82"/>
    </location>
</feature>
<feature type="domain" description="FIVAR 2">
    <location>
        <begin position="150"/>
        <end position="208"/>
    </location>
</feature>
<feature type="domain" description="FIVAR 3">
    <location>
        <begin position="276"/>
        <end position="334"/>
    </location>
</feature>
<feature type="domain" description="FIVAR 4">
    <location>
        <begin position="402"/>
        <end position="460"/>
    </location>
</feature>
<feature type="domain" description="FIVAR 5">
    <location>
        <begin position="528"/>
        <end position="586"/>
    </location>
</feature>
<feature type="domain" description="FIVAR 6">
    <location>
        <begin position="654"/>
        <end position="712"/>
    </location>
</feature>
<feature type="domain" description="FIVAR 7">
    <location>
        <begin position="780"/>
        <end position="838"/>
    </location>
</feature>
<feature type="domain" description="FIVAR 8">
    <location>
        <begin position="906"/>
        <end position="964"/>
    </location>
</feature>
<feature type="domain" description="FIVAR 9">
    <location>
        <begin position="1032"/>
        <end position="1093"/>
    </location>
</feature>
<feature type="domain" description="FIVAR 10">
    <location>
        <begin position="1158"/>
        <end position="1216"/>
    </location>
</feature>
<feature type="domain" description="FIVAR 11">
    <location>
        <begin position="1284"/>
        <end position="1342"/>
    </location>
</feature>
<feature type="domain" description="FIVAR 12">
    <location>
        <begin position="1410"/>
        <end position="1467"/>
    </location>
</feature>
<feature type="domain" description="FIVAR 13">
    <location>
        <begin position="1535"/>
        <end position="1593"/>
    </location>
</feature>
<feature type="domain" description="FIVAR 14">
    <location>
        <begin position="1661"/>
        <end position="1719"/>
    </location>
</feature>
<feature type="domain" description="FIVAR 15">
    <location>
        <begin position="1787"/>
        <end position="1845"/>
    </location>
</feature>
<feature type="domain" description="FIVAR 16">
    <location>
        <begin position="1913"/>
        <end position="1971"/>
    </location>
</feature>
<feature type="domain" description="FIVAR 17">
    <location>
        <begin position="2039"/>
        <end position="2093"/>
    </location>
</feature>
<feature type="domain" description="FIVAR 18">
    <location>
        <begin position="2161"/>
        <end position="2220"/>
    </location>
</feature>
<feature type="domain" description="FIVAR 19">
    <location>
        <begin position="2415"/>
        <end position="2471"/>
    </location>
</feature>
<feature type="region of interest" description="Disordered" evidence="2">
    <location>
        <begin position="1"/>
        <end position="21"/>
    </location>
</feature>
<feature type="region of interest" description="Disordered" evidence="2">
    <location>
        <begin position="3365"/>
        <end position="3462"/>
    </location>
</feature>
<feature type="compositionally biased region" description="Polar residues" evidence="2">
    <location>
        <begin position="1"/>
        <end position="19"/>
    </location>
</feature>
<feature type="compositionally biased region" description="Basic and acidic residues" evidence="2">
    <location>
        <begin position="3380"/>
        <end position="3390"/>
    </location>
</feature>
<feature type="compositionally biased region" description="Basic and acidic residues" evidence="2">
    <location>
        <begin position="3429"/>
        <end position="3439"/>
    </location>
</feature>
<feature type="compositionally biased region" description="Basic residues" evidence="2">
    <location>
        <begin position="3444"/>
        <end position="3462"/>
    </location>
</feature>